<accession>P41020</accession>
<accession>A0A0H3YL32</accession>
<proteinExistence type="evidence at protein level"/>
<dbReference type="EC" id="3.5.1.5" evidence="1 6"/>
<dbReference type="EMBL" id="X78411">
    <property type="protein sequence ID" value="CAA55175.1"/>
    <property type="molecule type" value="Genomic_DNA"/>
</dbReference>
<dbReference type="EMBL" id="KR133628">
    <property type="protein sequence ID" value="AKN22164.1"/>
    <property type="molecule type" value="Genomic_DNA"/>
</dbReference>
<dbReference type="EMBL" id="UGYZ01000002">
    <property type="protein sequence ID" value="SUJ11615.1"/>
    <property type="molecule type" value="Genomic_DNA"/>
</dbReference>
<dbReference type="EMBL" id="U29368">
    <property type="protein sequence ID" value="AAA73986.1"/>
    <property type="molecule type" value="Genomic_DNA"/>
</dbReference>
<dbReference type="PIR" id="S47104">
    <property type="entry name" value="S47104"/>
</dbReference>
<dbReference type="PDB" id="1IE7">
    <property type="method" value="X-ray"/>
    <property type="resolution" value="1.85 A"/>
    <property type="chains" value="C=1-570"/>
</dbReference>
<dbReference type="PDB" id="1S3T">
    <property type="method" value="X-ray"/>
    <property type="resolution" value="2.10 A"/>
    <property type="chains" value="C=1-570"/>
</dbReference>
<dbReference type="PDB" id="1UBP">
    <property type="method" value="X-ray"/>
    <property type="resolution" value="1.65 A"/>
    <property type="chains" value="C=1-570"/>
</dbReference>
<dbReference type="PDB" id="2UBP">
    <property type="method" value="X-ray"/>
    <property type="resolution" value="2.00 A"/>
    <property type="chains" value="C=1-570"/>
</dbReference>
<dbReference type="PDB" id="3UBP">
    <property type="method" value="X-ray"/>
    <property type="resolution" value="2.00 A"/>
    <property type="chains" value="C=1-570"/>
</dbReference>
<dbReference type="PDB" id="4AC7">
    <property type="method" value="X-ray"/>
    <property type="resolution" value="1.50 A"/>
    <property type="chains" value="C=1-570"/>
</dbReference>
<dbReference type="PDB" id="4CEU">
    <property type="method" value="X-ray"/>
    <property type="resolution" value="1.58 A"/>
    <property type="chains" value="C=1-570"/>
</dbReference>
<dbReference type="PDB" id="4CEX">
    <property type="method" value="X-ray"/>
    <property type="resolution" value="1.59 A"/>
    <property type="chains" value="C=1-570"/>
</dbReference>
<dbReference type="PDB" id="4UBP">
    <property type="method" value="X-ray"/>
    <property type="resolution" value="1.55 A"/>
    <property type="chains" value="C=1-570"/>
</dbReference>
<dbReference type="PDB" id="5A6T">
    <property type="method" value="X-ray"/>
    <property type="resolution" value="1.65 A"/>
    <property type="chains" value="C=1-570"/>
</dbReference>
<dbReference type="PDB" id="5FSD">
    <property type="method" value="X-ray"/>
    <property type="resolution" value="1.75 A"/>
    <property type="chains" value="C=1-570"/>
</dbReference>
<dbReference type="PDB" id="5FSE">
    <property type="method" value="X-ray"/>
    <property type="resolution" value="2.07 A"/>
    <property type="chains" value="C=1-570"/>
</dbReference>
<dbReference type="PDB" id="5OL4">
    <property type="method" value="X-ray"/>
    <property type="resolution" value="1.28 A"/>
    <property type="chains" value="C=1-570"/>
</dbReference>
<dbReference type="PDB" id="6G48">
    <property type="method" value="X-ray"/>
    <property type="resolution" value="1.91 A"/>
    <property type="chains" value="C=1-570"/>
</dbReference>
<dbReference type="PDB" id="6H8J">
    <property type="method" value="X-ray"/>
    <property type="resolution" value="1.45 A"/>
    <property type="chains" value="C=1-570"/>
</dbReference>
<dbReference type="PDB" id="6I9Y">
    <property type="method" value="X-ray"/>
    <property type="resolution" value="2.14 A"/>
    <property type="chains" value="C=1-570"/>
</dbReference>
<dbReference type="PDB" id="6QDY">
    <property type="method" value="X-ray"/>
    <property type="resolution" value="1.42 A"/>
    <property type="chains" value="C=1-570"/>
</dbReference>
<dbReference type="PDB" id="6RKG">
    <property type="method" value="X-ray"/>
    <property type="resolution" value="1.32 A"/>
    <property type="chains" value="C=1-570"/>
</dbReference>
<dbReference type="PDB" id="6RP1">
    <property type="method" value="X-ray"/>
    <property type="resolution" value="1.49 A"/>
    <property type="chains" value="C=1-570"/>
</dbReference>
<dbReference type="PDB" id="6ZNY">
    <property type="method" value="X-ray"/>
    <property type="resolution" value="1.50 A"/>
    <property type="chains" value="CCC=1-570"/>
</dbReference>
<dbReference type="PDB" id="6ZNZ">
    <property type="method" value="X-ray"/>
    <property type="resolution" value="1.89 A"/>
    <property type="chains" value="CCC=1-570"/>
</dbReference>
<dbReference type="PDB" id="6ZO0">
    <property type="method" value="X-ray"/>
    <property type="resolution" value="2.23 A"/>
    <property type="chains" value="CCC=1-570"/>
</dbReference>
<dbReference type="PDB" id="6ZO1">
    <property type="method" value="X-ray"/>
    <property type="resolution" value="1.61 A"/>
    <property type="chains" value="CCC=1-570"/>
</dbReference>
<dbReference type="PDB" id="6ZO2">
    <property type="method" value="X-ray"/>
    <property type="resolution" value="1.65 A"/>
    <property type="chains" value="CCC=1-570"/>
</dbReference>
<dbReference type="PDB" id="6ZO3">
    <property type="method" value="X-ray"/>
    <property type="resolution" value="1.55 A"/>
    <property type="chains" value="CCC=1-570"/>
</dbReference>
<dbReference type="PDB" id="7B58">
    <property type="method" value="X-ray"/>
    <property type="resolution" value="1.72 A"/>
    <property type="chains" value="CCC=1-570"/>
</dbReference>
<dbReference type="PDB" id="7B59">
    <property type="method" value="X-ray"/>
    <property type="resolution" value="1.63 A"/>
    <property type="chains" value="CCC=1-570"/>
</dbReference>
<dbReference type="PDB" id="7B5A">
    <property type="method" value="X-ray"/>
    <property type="resolution" value="1.97 A"/>
    <property type="chains" value="CCC=1-570"/>
</dbReference>
<dbReference type="PDB" id="7P7N">
    <property type="method" value="X-ray"/>
    <property type="resolution" value="1.80 A"/>
    <property type="chains" value="CCC=1-570"/>
</dbReference>
<dbReference type="PDB" id="7P7O">
    <property type="method" value="X-ray"/>
    <property type="resolution" value="1.87 A"/>
    <property type="chains" value="CCC=1-570"/>
</dbReference>
<dbReference type="PDB" id="7ZCY">
    <property type="method" value="X-ray"/>
    <property type="resolution" value="1.54 A"/>
    <property type="chains" value="C=1-570"/>
</dbReference>
<dbReference type="PDB" id="8A18">
    <property type="method" value="X-ray"/>
    <property type="resolution" value="1.63 A"/>
    <property type="chains" value="CCC=1-570"/>
</dbReference>
<dbReference type="PDB" id="8Q2E">
    <property type="method" value="X-ray"/>
    <property type="resolution" value="1.68 A"/>
    <property type="chains" value="C=1-570"/>
</dbReference>
<dbReference type="PDBsum" id="1IE7"/>
<dbReference type="PDBsum" id="1S3T"/>
<dbReference type="PDBsum" id="1UBP"/>
<dbReference type="PDBsum" id="2UBP"/>
<dbReference type="PDBsum" id="3UBP"/>
<dbReference type="PDBsum" id="4AC7"/>
<dbReference type="PDBsum" id="4CEU"/>
<dbReference type="PDBsum" id="4CEX"/>
<dbReference type="PDBsum" id="4UBP"/>
<dbReference type="PDBsum" id="5A6T"/>
<dbReference type="PDBsum" id="5FSD"/>
<dbReference type="PDBsum" id="5FSE"/>
<dbReference type="PDBsum" id="5OL4"/>
<dbReference type="PDBsum" id="6G48"/>
<dbReference type="PDBsum" id="6H8J"/>
<dbReference type="PDBsum" id="6I9Y"/>
<dbReference type="PDBsum" id="6QDY"/>
<dbReference type="PDBsum" id="6RKG"/>
<dbReference type="PDBsum" id="6RP1"/>
<dbReference type="PDBsum" id="6ZNY"/>
<dbReference type="PDBsum" id="6ZNZ"/>
<dbReference type="PDBsum" id="6ZO0"/>
<dbReference type="PDBsum" id="6ZO1"/>
<dbReference type="PDBsum" id="6ZO2"/>
<dbReference type="PDBsum" id="6ZO3"/>
<dbReference type="PDBsum" id="7B58"/>
<dbReference type="PDBsum" id="7B59"/>
<dbReference type="PDBsum" id="7B5A"/>
<dbReference type="PDBsum" id="7P7N"/>
<dbReference type="PDBsum" id="7P7O"/>
<dbReference type="PDBsum" id="7ZCY"/>
<dbReference type="PDBsum" id="8A18"/>
<dbReference type="PDBsum" id="8Q2E"/>
<dbReference type="SMR" id="P41020"/>
<dbReference type="BindingDB" id="P41020"/>
<dbReference type="DrugBank" id="DB01005">
    <property type="generic name" value="Hydroxyurea"/>
</dbReference>
<dbReference type="DrugBank" id="DB02899">
    <property type="generic name" value="N-Carboxymethionine"/>
</dbReference>
<dbReference type="MEROPS" id="M38.982"/>
<dbReference type="BRENDA" id="3.5.1.5">
    <property type="organism ID" value="682"/>
</dbReference>
<dbReference type="UniPathway" id="UPA00258">
    <property type="reaction ID" value="UER00370"/>
</dbReference>
<dbReference type="EvolutionaryTrace" id="P41020"/>
<dbReference type="Proteomes" id="UP000254519">
    <property type="component" value="Unassembled WGS sequence"/>
</dbReference>
<dbReference type="GO" id="GO:0005737">
    <property type="term" value="C:cytoplasm"/>
    <property type="evidence" value="ECO:0007669"/>
    <property type="project" value="UniProtKB-SubCell"/>
</dbReference>
<dbReference type="GO" id="GO:0016151">
    <property type="term" value="F:nickel cation binding"/>
    <property type="evidence" value="ECO:0007669"/>
    <property type="project" value="UniProtKB-UniRule"/>
</dbReference>
<dbReference type="GO" id="GO:0009039">
    <property type="term" value="F:urease activity"/>
    <property type="evidence" value="ECO:0007669"/>
    <property type="project" value="UniProtKB-UniRule"/>
</dbReference>
<dbReference type="GO" id="GO:0043419">
    <property type="term" value="P:urea catabolic process"/>
    <property type="evidence" value="ECO:0007669"/>
    <property type="project" value="UniProtKB-UniRule"/>
</dbReference>
<dbReference type="CDD" id="cd00375">
    <property type="entry name" value="Urease_alpha"/>
    <property type="match status" value="1"/>
</dbReference>
<dbReference type="Gene3D" id="3.20.20.140">
    <property type="entry name" value="Metal-dependent hydrolases"/>
    <property type="match status" value="1"/>
</dbReference>
<dbReference type="Gene3D" id="2.30.40.10">
    <property type="entry name" value="Urease, subunit C, domain 1"/>
    <property type="match status" value="1"/>
</dbReference>
<dbReference type="HAMAP" id="MF_01953">
    <property type="entry name" value="Urease_alpha"/>
    <property type="match status" value="1"/>
</dbReference>
<dbReference type="InterPro" id="IPR006680">
    <property type="entry name" value="Amidohydro-rel"/>
</dbReference>
<dbReference type="InterPro" id="IPR011059">
    <property type="entry name" value="Metal-dep_hydrolase_composite"/>
</dbReference>
<dbReference type="InterPro" id="IPR032466">
    <property type="entry name" value="Metal_Hydrolase"/>
</dbReference>
<dbReference type="InterPro" id="IPR011612">
    <property type="entry name" value="Urease_alpha_N_dom"/>
</dbReference>
<dbReference type="InterPro" id="IPR050112">
    <property type="entry name" value="Urease_alpha_subunit"/>
</dbReference>
<dbReference type="InterPro" id="IPR017950">
    <property type="entry name" value="Urease_AS"/>
</dbReference>
<dbReference type="InterPro" id="IPR005848">
    <property type="entry name" value="Urease_asu"/>
</dbReference>
<dbReference type="InterPro" id="IPR017951">
    <property type="entry name" value="Urease_asu_c"/>
</dbReference>
<dbReference type="InterPro" id="IPR029754">
    <property type="entry name" value="Urease_Ni-bd"/>
</dbReference>
<dbReference type="NCBIfam" id="NF009686">
    <property type="entry name" value="PRK13207.1"/>
    <property type="match status" value="1"/>
</dbReference>
<dbReference type="NCBIfam" id="TIGR01792">
    <property type="entry name" value="urease_alph"/>
    <property type="match status" value="1"/>
</dbReference>
<dbReference type="PANTHER" id="PTHR43440">
    <property type="entry name" value="UREASE"/>
    <property type="match status" value="1"/>
</dbReference>
<dbReference type="PANTHER" id="PTHR43440:SF1">
    <property type="entry name" value="UREASE"/>
    <property type="match status" value="1"/>
</dbReference>
<dbReference type="Pfam" id="PF01979">
    <property type="entry name" value="Amidohydro_1"/>
    <property type="match status" value="1"/>
</dbReference>
<dbReference type="Pfam" id="PF00449">
    <property type="entry name" value="Urease_alpha"/>
    <property type="match status" value="1"/>
</dbReference>
<dbReference type="PRINTS" id="PR01752">
    <property type="entry name" value="UREASE"/>
</dbReference>
<dbReference type="SUPFAM" id="SSF51338">
    <property type="entry name" value="Composite domain of metallo-dependent hydrolases"/>
    <property type="match status" value="1"/>
</dbReference>
<dbReference type="SUPFAM" id="SSF51556">
    <property type="entry name" value="Metallo-dependent hydrolases"/>
    <property type="match status" value="1"/>
</dbReference>
<dbReference type="PROSITE" id="PS01120">
    <property type="entry name" value="UREASE_1"/>
    <property type="match status" value="1"/>
</dbReference>
<dbReference type="PROSITE" id="PS00145">
    <property type="entry name" value="UREASE_2"/>
    <property type="match status" value="1"/>
</dbReference>
<dbReference type="PROSITE" id="PS51368">
    <property type="entry name" value="UREASE_3"/>
    <property type="match status" value="1"/>
</dbReference>
<feature type="chain" id="PRO_0000067536" description="Urease subunit alpha">
    <location>
        <begin position="1"/>
        <end position="570"/>
    </location>
</feature>
<feature type="domain" description="Urease" evidence="1">
    <location>
        <begin position="132"/>
        <end position="570"/>
    </location>
</feature>
<feature type="active site" description="Proton donor" evidence="8">
    <location>
        <position position="323"/>
    </location>
</feature>
<feature type="binding site" evidence="1 2 3 4 5 6 7">
    <location>
        <position position="137"/>
    </location>
    <ligand>
        <name>Ni(2+)</name>
        <dbReference type="ChEBI" id="CHEBI:49786"/>
        <label>1</label>
    </ligand>
</feature>
<feature type="binding site" evidence="1 2 3 4 5 6 7">
    <location>
        <position position="139"/>
    </location>
    <ligand>
        <name>Ni(2+)</name>
        <dbReference type="ChEBI" id="CHEBI:49786"/>
        <label>1</label>
    </ligand>
</feature>
<feature type="binding site" evidence="6">
    <location>
        <position position="139"/>
    </location>
    <ligand>
        <name>substrate</name>
    </ligand>
</feature>
<feature type="binding site" evidence="6">
    <location>
        <position position="170"/>
    </location>
    <ligand>
        <name>substrate</name>
    </ligand>
</feature>
<feature type="binding site" description="via carbamate group" evidence="1 2 3 4 5 6 7">
    <location>
        <position position="220"/>
    </location>
    <ligand>
        <name>Ni(2+)</name>
        <dbReference type="ChEBI" id="CHEBI:49786"/>
        <label>1</label>
    </ligand>
</feature>
<feature type="binding site" description="via carbamate group" evidence="1 2 3 4 5 6 7">
    <location>
        <position position="220"/>
    </location>
    <ligand>
        <name>Ni(2+)</name>
        <dbReference type="ChEBI" id="CHEBI:49786"/>
        <label>2</label>
    </ligand>
</feature>
<feature type="binding site" evidence="6">
    <location>
        <position position="222"/>
    </location>
    <ligand>
        <name>substrate</name>
    </ligand>
</feature>
<feature type="binding site" evidence="1 2 3 4 5 6 7">
    <location>
        <position position="249"/>
    </location>
    <ligand>
        <name>Ni(2+)</name>
        <dbReference type="ChEBI" id="CHEBI:49786"/>
        <label>2</label>
    </ligand>
</feature>
<feature type="binding site" evidence="6">
    <location>
        <position position="249"/>
    </location>
    <ligand>
        <name>substrate</name>
    </ligand>
</feature>
<feature type="binding site" evidence="1 2 3 4 5 6 7">
    <location>
        <position position="275"/>
    </location>
    <ligand>
        <name>Ni(2+)</name>
        <dbReference type="ChEBI" id="CHEBI:49786"/>
        <label>2</label>
    </ligand>
</feature>
<feature type="binding site" evidence="1 2 3 4 5 6 7">
    <location>
        <position position="363"/>
    </location>
    <ligand>
        <name>Ni(2+)</name>
        <dbReference type="ChEBI" id="CHEBI:49786"/>
        <label>1</label>
    </ligand>
</feature>
<feature type="binding site" evidence="6">
    <location>
        <position position="366"/>
    </location>
    <ligand>
        <name>substrate</name>
    </ligand>
</feature>
<feature type="modified residue" description="N6-carboxylysine" evidence="1 2 3 4 5 6 7 9 10 11 12 14">
    <location>
        <position position="220"/>
    </location>
</feature>
<feature type="sequence conflict" description="In Ref. 1; CAA55175." evidence="8" ref="1">
    <original>Q</original>
    <variation>R</variation>
    <location>
        <position position="19"/>
    </location>
</feature>
<feature type="sequence conflict" description="In Ref. 1; CAA55175." evidence="8" ref="1">
    <original>WI</original>
    <variation>G</variation>
    <location>
        <begin position="28"/>
        <end position="29"/>
    </location>
</feature>
<feature type="sequence conflict" description="In Ref. 1; CAA55175." evidence="8" ref="1">
    <original>TTYGDEA</original>
    <variation>YYLGDEV</variation>
    <location>
        <begin position="35"/>
        <end position="41"/>
    </location>
</feature>
<feature type="sequence conflict" description="In Ref. 1; CAA55175." evidence="8" ref="1">
    <original>L</original>
    <variation>V</variation>
    <location>
        <position position="263"/>
    </location>
</feature>
<feature type="sequence conflict" description="In Ref. 1; CAA55175." evidence="8" ref="1">
    <original>A</original>
    <variation>L</variation>
    <location>
        <position position="403"/>
    </location>
</feature>
<feature type="sequence conflict" description="In Ref. 1; CAA55175." evidence="8" ref="1">
    <original>I</original>
    <variation>M</variation>
    <location>
        <position position="420"/>
    </location>
</feature>
<feature type="sequence conflict" description="In Ref. 4; AAA73986." evidence="8" ref="4">
    <original>SSIQQ</original>
    <variation>ELNSE</variation>
    <location>
        <begin position="498"/>
        <end position="502"/>
    </location>
</feature>
<feature type="strand" evidence="18">
    <location>
        <begin position="2"/>
        <end position="4"/>
    </location>
</feature>
<feature type="helix" evidence="18">
    <location>
        <begin position="5"/>
        <end position="12"/>
    </location>
</feature>
<feature type="strand" evidence="18">
    <location>
        <begin position="19"/>
        <end position="21"/>
    </location>
</feature>
<feature type="strand" evidence="18">
    <location>
        <begin position="28"/>
        <end position="30"/>
    </location>
</feature>
<feature type="strand" evidence="16">
    <location>
        <begin position="48"/>
        <end position="52"/>
    </location>
</feature>
<feature type="turn" evidence="18">
    <location>
        <begin position="53"/>
        <end position="55"/>
    </location>
</feature>
<feature type="turn" evidence="18">
    <location>
        <begin position="62"/>
        <end position="65"/>
    </location>
</feature>
<feature type="strand" evidence="18">
    <location>
        <begin position="68"/>
        <end position="78"/>
    </location>
</feature>
<feature type="strand" evidence="18">
    <location>
        <begin position="81"/>
        <end position="90"/>
    </location>
</feature>
<feature type="strand" evidence="18">
    <location>
        <begin position="93"/>
        <end position="98"/>
    </location>
</feature>
<feature type="turn" evidence="18">
    <location>
        <begin position="103"/>
        <end position="105"/>
    </location>
</feature>
<feature type="strand" evidence="18">
    <location>
        <begin position="120"/>
        <end position="123"/>
    </location>
</feature>
<feature type="strand" evidence="18">
    <location>
        <begin position="128"/>
        <end position="131"/>
    </location>
</feature>
<feature type="strand" evidence="18">
    <location>
        <begin position="133"/>
        <end position="139"/>
    </location>
</feature>
<feature type="helix" evidence="18">
    <location>
        <begin position="145"/>
        <end position="151"/>
    </location>
</feature>
<feature type="strand" evidence="18">
    <location>
        <begin position="154"/>
        <end position="160"/>
    </location>
</feature>
<feature type="strand" evidence="18">
    <location>
        <begin position="162"/>
        <end position="164"/>
    </location>
</feature>
<feature type="helix" evidence="18">
    <location>
        <begin position="166"/>
        <end position="170"/>
    </location>
</feature>
<feature type="helix" evidence="18">
    <location>
        <begin position="176"/>
        <end position="187"/>
    </location>
</feature>
<feature type="strand" evidence="18">
    <location>
        <begin position="191"/>
        <end position="199"/>
    </location>
</feature>
<feature type="helix" evidence="18">
    <location>
        <begin position="205"/>
        <end position="214"/>
    </location>
</feature>
<feature type="strand" evidence="18">
    <location>
        <begin position="218"/>
        <end position="222"/>
    </location>
</feature>
<feature type="helix" evidence="18">
    <location>
        <begin position="223"/>
        <end position="225"/>
    </location>
</feature>
<feature type="helix" evidence="18">
    <location>
        <begin position="229"/>
        <end position="242"/>
    </location>
</feature>
<feature type="strand" evidence="18">
    <location>
        <begin position="245"/>
        <end position="249"/>
    </location>
</feature>
<feature type="helix" evidence="18">
    <location>
        <begin position="259"/>
        <end position="266"/>
    </location>
</feature>
<feature type="strand" evidence="18">
    <location>
        <begin position="271"/>
        <end position="275"/>
    </location>
</feature>
<feature type="strand" evidence="17">
    <location>
        <begin position="281"/>
        <end position="283"/>
    </location>
</feature>
<feature type="turn" evidence="18">
    <location>
        <begin position="284"/>
        <end position="286"/>
    </location>
</feature>
<feature type="helix" evidence="18">
    <location>
        <begin position="287"/>
        <end position="292"/>
    </location>
</feature>
<feature type="strand" evidence="18">
    <location>
        <begin position="296"/>
        <end position="300"/>
    </location>
</feature>
<feature type="helix" evidence="17">
    <location>
        <begin position="302"/>
        <end position="304"/>
    </location>
</feature>
<feature type="helix" evidence="18">
    <location>
        <begin position="311"/>
        <end position="322"/>
    </location>
</feature>
<feature type="helix" evidence="18">
    <location>
        <begin position="330"/>
        <end position="338"/>
    </location>
</feature>
<feature type="helix" evidence="18">
    <location>
        <begin position="342"/>
        <end position="353"/>
    </location>
</feature>
<feature type="strand" evidence="18">
    <location>
        <begin position="366"/>
        <end position="368"/>
    </location>
</feature>
<feature type="helix" evidence="18">
    <location>
        <begin position="373"/>
        <end position="388"/>
    </location>
</feature>
<feature type="helix" evidence="18">
    <location>
        <begin position="400"/>
        <end position="410"/>
    </location>
</feature>
<feature type="helix" evidence="18">
    <location>
        <begin position="412"/>
        <end position="418"/>
    </location>
</feature>
<feature type="turn" evidence="18">
    <location>
        <begin position="421"/>
        <end position="423"/>
    </location>
</feature>
<feature type="strand" evidence="18">
    <location>
        <begin position="424"/>
        <end position="426"/>
    </location>
</feature>
<feature type="strand" evidence="18">
    <location>
        <begin position="435"/>
        <end position="438"/>
    </location>
</feature>
<feature type="helix" evidence="18">
    <location>
        <begin position="440"/>
        <end position="442"/>
    </location>
</feature>
<feature type="turn" evidence="18">
    <location>
        <begin position="443"/>
        <end position="445"/>
    </location>
</feature>
<feature type="strand" evidence="18">
    <location>
        <begin position="448"/>
        <end position="452"/>
    </location>
</feature>
<feature type="strand" evidence="18">
    <location>
        <begin position="455"/>
        <end position="461"/>
    </location>
</feature>
<feature type="strand" evidence="18">
    <location>
        <begin position="466"/>
        <end position="469"/>
    </location>
</feature>
<feature type="strand" evidence="18">
    <location>
        <begin position="475"/>
        <end position="478"/>
    </location>
</feature>
<feature type="helix" evidence="18">
    <location>
        <begin position="480"/>
        <end position="482"/>
    </location>
</feature>
<feature type="helix" evidence="18">
    <location>
        <begin position="486"/>
        <end position="489"/>
    </location>
</feature>
<feature type="strand" evidence="18">
    <location>
        <begin position="492"/>
        <end position="495"/>
    </location>
</feature>
<feature type="helix" evidence="18">
    <location>
        <begin position="497"/>
        <end position="501"/>
    </location>
</feature>
<feature type="helix" evidence="18">
    <location>
        <begin position="504"/>
        <end position="508"/>
    </location>
</feature>
<feature type="strand" evidence="18">
    <location>
        <begin position="512"/>
        <end position="516"/>
    </location>
</feature>
<feature type="helix" evidence="18">
    <location>
        <begin position="525"/>
        <end position="527"/>
    </location>
</feature>
<feature type="strand" evidence="18">
    <location>
        <begin position="537"/>
        <end position="539"/>
    </location>
</feature>
<feature type="turn" evidence="18">
    <location>
        <begin position="541"/>
        <end position="543"/>
    </location>
</feature>
<feature type="strand" evidence="18">
    <location>
        <begin position="546"/>
        <end position="548"/>
    </location>
</feature>
<feature type="strand" evidence="19">
    <location>
        <begin position="551"/>
        <end position="553"/>
    </location>
</feature>
<feature type="strand" evidence="18">
    <location>
        <begin position="562"/>
        <end position="564"/>
    </location>
</feature>
<feature type="turn" evidence="18">
    <location>
        <begin position="565"/>
        <end position="567"/>
    </location>
</feature>
<keyword id="KW-0002">3D-structure</keyword>
<keyword id="KW-0963">Cytoplasm</keyword>
<keyword id="KW-0378">Hydrolase</keyword>
<keyword id="KW-0479">Metal-binding</keyword>
<keyword id="KW-0533">Nickel</keyword>
<keyword id="KW-1185">Reference proteome</keyword>
<organism>
    <name type="scientific">Sporosarcina pasteurii</name>
    <name type="common">Bacillus pasteurii</name>
    <dbReference type="NCBI Taxonomy" id="1474"/>
    <lineage>
        <taxon>Bacteria</taxon>
        <taxon>Bacillati</taxon>
        <taxon>Bacillota</taxon>
        <taxon>Bacilli</taxon>
        <taxon>Bacillales</taxon>
        <taxon>Caryophanaceae</taxon>
        <taxon>Sporosarcina</taxon>
    </lineage>
</organism>
<sequence>MKINRQQYAESYGPTVGDQVRLADTDLWIEVEKDTTYGDEAVNFGGGKVLREGMGENGTYTRTENVLDLLLTNALILDYTGIYKADIGVKDGYIVGIGKGGNPDIMDGVTPNMIVGTATEVIAAEGKIVTAGGIDTHVHFINPDQVDVALANGITTLFGGGTGPAEGSKATTVTPGPWNIEKMLKSTEGLPINVGILGKGHGSSIAPIMEQIDAGAAGLKIHEDWGATPASIDRSLTVADEADVQVAIHSDTLNEAGFLEDTLRAINGRVIHSFHVEGAGGGHAPDIMAMAGHPNVLPSSTNPTRPFTVNTIDEHLDMLMVCHHLKQNIPEDVAFADSRIRPETIAAEDILHDLGIISMMSTDALAMGRAGEMVLRTWQTADKMKKQRGPLAEEKNGSDNFRAKRYVSKYTINPAIAQGIAHEVGSIEEGKFADLVLWEPKFFGVKADRVIKGGIIAYAQIGDPSASIPTPQPVMGRRMYGTVGDLIHDTNITFMSKSSIQQGVPAKLGLKRRIGTVKNCRNIGKKDMKWNDVTTDIDINPETYEVKVDGEVLTCEPVKELPMAQRYFLF</sequence>
<protein>
    <recommendedName>
        <fullName evidence="1">Urease subunit alpha</fullName>
        <ecNumber evidence="1 6">3.5.1.5</ecNumber>
    </recommendedName>
    <alternativeName>
        <fullName evidence="1">Urea amidohydrolase subunit alpha</fullName>
    </alternativeName>
</protein>
<name>URE1_SPOPA</name>
<evidence type="ECO:0000255" key="1">
    <source>
        <dbReference type="HAMAP-Rule" id="MF_01953"/>
    </source>
</evidence>
<evidence type="ECO:0000269" key="2">
    <source>
    </source>
</evidence>
<evidence type="ECO:0000269" key="3">
    <source>
    </source>
</evidence>
<evidence type="ECO:0000269" key="4">
    <source>
    </source>
</evidence>
<evidence type="ECO:0000269" key="5">
    <source>
    </source>
</evidence>
<evidence type="ECO:0000269" key="6">
    <source>
    </source>
</evidence>
<evidence type="ECO:0000269" key="7">
    <source ref="5"/>
</evidence>
<evidence type="ECO:0000305" key="8"/>
<evidence type="ECO:0007744" key="9">
    <source>
        <dbReference type="PDB" id="1IE7"/>
    </source>
</evidence>
<evidence type="ECO:0007744" key="10">
    <source>
        <dbReference type="PDB" id="1S3T"/>
    </source>
</evidence>
<evidence type="ECO:0007744" key="11">
    <source>
        <dbReference type="PDB" id="1UBP"/>
    </source>
</evidence>
<evidence type="ECO:0007744" key="12">
    <source>
        <dbReference type="PDB" id="2UBP"/>
    </source>
</evidence>
<evidence type="ECO:0007744" key="13">
    <source>
        <dbReference type="PDB" id="3UBP"/>
    </source>
</evidence>
<evidence type="ECO:0007744" key="14">
    <source>
        <dbReference type="PDB" id="4UBP"/>
    </source>
</evidence>
<evidence type="ECO:0007744" key="15">
    <source>
        <dbReference type="PDB" id="6QDY"/>
    </source>
</evidence>
<evidence type="ECO:0007829" key="16">
    <source>
        <dbReference type="PDB" id="1UBP"/>
    </source>
</evidence>
<evidence type="ECO:0007829" key="17">
    <source>
        <dbReference type="PDB" id="4AC7"/>
    </source>
</evidence>
<evidence type="ECO:0007829" key="18">
    <source>
        <dbReference type="PDB" id="5OL4"/>
    </source>
</evidence>
<evidence type="ECO:0007829" key="19">
    <source>
        <dbReference type="PDB" id="6G48"/>
    </source>
</evidence>
<reference key="1">
    <citation type="submission" date="1994-06" db="EMBL/GenBank/DDBJ databases">
        <title>Nucleotide sequence of three genes on a urease encoding DNA-fragment from Bacillus pasteurii.</title>
        <authorList>
            <person name="Moersdorf G."/>
            <person name="Weinmann P."/>
            <person name="Kaltwasser H."/>
        </authorList>
    </citation>
    <scope>NUCLEOTIDE SEQUENCE [GENOMIC DNA]</scope>
    <source>
        <strain>ATCC 11859 / DSM 33 / NCIB 8841 / NCTC 4822</strain>
    </source>
</reference>
<reference key="2">
    <citation type="submission" date="2015-04" db="EMBL/GenBank/DDBJ databases">
        <authorList>
            <person name="Mazzei L."/>
            <person name="Musiani F."/>
            <person name="Zambelli B."/>
            <person name="Ciurli S."/>
        </authorList>
    </citation>
    <scope>NUCLEOTIDE SEQUENCE [GENOMIC DNA]</scope>
    <source>
        <strain>ATCC 11859 / DSM 33 / NCIB 8841 / NCTC 4822</strain>
    </source>
</reference>
<reference key="3">
    <citation type="submission" date="2018-06" db="EMBL/GenBank/DDBJ databases">
        <authorList>
            <consortium name="Pathogen Informatics"/>
            <person name="Doyle S."/>
        </authorList>
    </citation>
    <scope>NUCLEOTIDE SEQUENCE [LARGE SCALE GENOMIC DNA]</scope>
    <source>
        <strain>ATCC 11859 / DSM 33 / NCIB 8841 / NCTC 4822</strain>
    </source>
</reference>
<reference key="4">
    <citation type="journal article" date="1995" name="Mol. Cells">
        <title>Genetic organization and nucleotide sequence of the ure gene cluster in Bacillus pasteurii.</title>
        <authorList>
            <person name="You J.-H."/>
            <person name="Kim J.-G."/>
            <person name="Song B.-H."/>
            <person name="Lee M.-H."/>
            <person name="Kim S.-D."/>
        </authorList>
    </citation>
    <scope>NUCLEOTIDE SEQUENCE [GENOMIC DNA] OF 498-570</scope>
    <source>
        <strain>ATCC 11859 / DSM 33 / NCIB 8841 / NCTC 4822</strain>
    </source>
</reference>
<reference evidence="11" key="5">
    <citation type="journal article" date="1998" name="J. Biol. Inorg. Chem.">
        <title>The complex of Bacillus pasteurii urease with beta-mercaptoethanol from X-ray data at 1.65-A resolution.</title>
        <authorList>
            <person name="Benini S."/>
            <person name="Rypniewski W.R."/>
            <person name="Wilson K.S."/>
            <person name="Ciurli S."/>
            <person name="Mangani S."/>
        </authorList>
    </citation>
    <scope>X-RAY CRYSTALLOGRAPHY (1.65 ANGSTROMS) IN COMPLEX WITH UREA; UREB; NICKEL IONS AND BETA-MERCAPTOETHANOL</scope>
    <scope>CARBOXYLATION AT LYS-220</scope>
    <source>
        <strain>ATCC 11859 / DSM 33 / NCIB 8841 / NCTC 4822</strain>
    </source>
</reference>
<reference evidence="12 13" key="6">
    <citation type="journal article" date="1999" name="Structure">
        <title>A new proposal for urease mechanism based on the crystal structures of the native and inhibited enzyme from Bacillus pasteurii: why urea hydrolysis costs two nickels.</title>
        <authorList>
            <person name="Benini S."/>
            <person name="Rypniewski W.R."/>
            <person name="Wilson K.S."/>
            <person name="Miletti S."/>
            <person name="Ciurli S."/>
            <person name="Mangani S."/>
        </authorList>
    </citation>
    <scope>X-RAY CRYSTALLOGRAPHY (2.0 ANGSTROMS) IN COMPLEX WITH UREA; UREB; NICKEL IONS AND DIAMIDOPHOSPHATE</scope>
    <scope>CARBOXYLATION AT LYS-220</scope>
    <source>
        <strain>ATCC 11859 / DSM 33 / NCIB 8841 / NCTC 4822</strain>
    </source>
</reference>
<reference evidence="14" key="7">
    <citation type="journal article" date="2000" name="J. Biol. Inorg. Chem.">
        <title>The complex of Bacillus pasteurii urease with acetohydroxamate anion from X-ray data at 1.55 A resolution.</title>
        <authorList>
            <person name="Benini S."/>
            <person name="Rypniewski W.R."/>
            <person name="Wilson K.S."/>
            <person name="Miletti S."/>
            <person name="Ciurli S."/>
            <person name="Mangani S."/>
        </authorList>
    </citation>
    <scope>X-RAY CRYSTALLOGRAPHY (1.55 ANGSTROMS) IN COMPLEX WITH UREA; UREB; NICKEL IONS AND ACETOHYDROXAMIC ACID</scope>
    <scope>CARBOXYLATION AT LYS-220</scope>
    <source>
        <strain>ATCC 11859 / DSM 33 / NCIB 8841 / NCTC 4822</strain>
    </source>
</reference>
<reference evidence="9" key="8">
    <citation type="journal article" date="2001" name="J. Biol. Inorg. Chem.">
        <title>Structure-based rationalization of urease inhibition by phosphate: novel insights into the enzyme mechanism.</title>
        <authorList>
            <person name="Benini S."/>
            <person name="Rypniewski W.R."/>
            <person name="Wilson K.S."/>
            <person name="Ciurli S."/>
            <person name="Mangani S."/>
        </authorList>
    </citation>
    <scope>X-RAY CRYSTALLOGRAPHY (1.85 ANGSTROMS) IN COMPLEX WITH UREA; UREB; NICKEL AND PHOSPHATE IONS</scope>
    <scope>CARBOXYLATION AT LYS-220</scope>
    <source>
        <strain>ATCC 11859 / DSM 33 / NCIB 8841 / NCTC 4822</strain>
    </source>
</reference>
<reference evidence="10" key="9">
    <citation type="journal article" date="2004" name="J. Am. Chem. Soc.">
        <title>Molecular details of urease inhibition by boric acid: insights into the catalytic mechanism.</title>
        <authorList>
            <person name="Benini S."/>
            <person name="Rypniewski W.R."/>
            <person name="Wilson K.S."/>
            <person name="Mangani S."/>
            <person name="Ciurli S."/>
        </authorList>
    </citation>
    <scope>X-RAY CRYSTALLOGRAPHY (2.1 ANGSTROMS) IN COMPLEX WITH UREA; UREB; NICKEL AND BORATE IONS</scope>
    <scope>CARBOXYLATION AT LYS-220</scope>
    <source>
        <strain>ATCC 11859 / DSM 33 / NCIB 8841 / NCTC 4822</strain>
    </source>
</reference>
<reference evidence="15" key="10">
    <citation type="journal article" date="2019" name="Angew. Chem. Int. Ed. Engl.">
        <title>The Structure of the Elusive Urease-Urea Complex Unveils the Mechanism of a Paradigmatic Nickel-Dependent Enzyme.</title>
        <authorList>
            <person name="Mazzei L."/>
            <person name="Cianci M."/>
            <person name="Benini S."/>
            <person name="Ciurli S."/>
        </authorList>
    </citation>
    <scope>X-RAY CRYSTALLOGRAPHY (1.42 ANGSTROMS) IN COMPLEX WITH SUBSTRATE; UREA; UREB; NICKEL AND FLUORIDE IONS</scope>
    <scope>CATALYTIC ACTIVITY</scope>
    <scope>REACTION MECHANISM</scope>
    <scope>ACTIVITY REGULATION</scope>
    <scope>CARBOXYLATION AT LYS-220</scope>
</reference>
<gene>
    <name evidence="1" type="primary">ureC</name>
    <name type="ORF">NCTC4822_02163</name>
</gene>
<comment type="catalytic activity">
    <reaction evidence="1 6">
        <text>urea + 2 H2O + H(+) = hydrogencarbonate + 2 NH4(+)</text>
        <dbReference type="Rhea" id="RHEA:20557"/>
        <dbReference type="ChEBI" id="CHEBI:15377"/>
        <dbReference type="ChEBI" id="CHEBI:15378"/>
        <dbReference type="ChEBI" id="CHEBI:16199"/>
        <dbReference type="ChEBI" id="CHEBI:17544"/>
        <dbReference type="ChEBI" id="CHEBI:28938"/>
        <dbReference type="EC" id="3.5.1.5"/>
    </reaction>
</comment>
<comment type="cofactor">
    <cofactor>
        <name>Ni cation</name>
        <dbReference type="ChEBI" id="CHEBI:25516"/>
    </cofactor>
    <text evidence="1 2 3 4 5 6 7">Binds 2 nickel ions per subunit.</text>
</comment>
<comment type="activity regulation">
    <text evidence="6">Inhibited by fluoride.</text>
</comment>
<comment type="pathway">
    <text evidence="1">Nitrogen metabolism; urea degradation; CO(2) and NH(3) from urea (urease route): step 1/1.</text>
</comment>
<comment type="subunit">
    <text evidence="1 2 3 4 5 6 7">Heterotrimer of UreA (gamma), UreB (beta) and UreC (alpha) subunits. Three heterotrimers associate to form the active enzyme.</text>
</comment>
<comment type="subcellular location">
    <subcellularLocation>
        <location evidence="1">Cytoplasm</location>
    </subcellularLocation>
</comment>
<comment type="PTM">
    <text evidence="2 3 4 6 7">Carboxylation allows a single lysine to coordinate two nickel ions.</text>
</comment>
<comment type="similarity">
    <text evidence="1">Belongs to the metallo-dependent hydrolases superfamily. Urease alpha subunit family.</text>
</comment>